<name>RS15_LEPBL</name>
<feature type="chain" id="PRO_1000054804" description="Small ribosomal subunit protein uS15">
    <location>
        <begin position="1"/>
        <end position="88"/>
    </location>
</feature>
<proteinExistence type="inferred from homology"/>
<organism>
    <name type="scientific">Leptospira borgpetersenii serovar Hardjo-bovis (strain L550)</name>
    <dbReference type="NCBI Taxonomy" id="355276"/>
    <lineage>
        <taxon>Bacteria</taxon>
        <taxon>Pseudomonadati</taxon>
        <taxon>Spirochaetota</taxon>
        <taxon>Spirochaetia</taxon>
        <taxon>Leptospirales</taxon>
        <taxon>Leptospiraceae</taxon>
        <taxon>Leptospira</taxon>
    </lineage>
</organism>
<comment type="function">
    <text evidence="1">One of the primary rRNA binding proteins, it binds directly to 16S rRNA where it helps nucleate assembly of the platform of the 30S subunit by binding and bridging several RNA helices of the 16S rRNA.</text>
</comment>
<comment type="function">
    <text evidence="1">Forms an intersubunit bridge (bridge B4) with the 23S rRNA of the 50S subunit in the ribosome.</text>
</comment>
<comment type="subunit">
    <text evidence="1">Part of the 30S ribosomal subunit. Forms a bridge to the 50S subunit in the 70S ribosome, contacting the 23S rRNA.</text>
</comment>
<comment type="similarity">
    <text evidence="1">Belongs to the universal ribosomal protein uS15 family.</text>
</comment>
<gene>
    <name evidence="1" type="primary">rpsO</name>
    <name type="ordered locus">LBL_2084</name>
</gene>
<accession>Q04ZJ8</accession>
<sequence>MIAAEQKKQIISNFARKAGDTGSTEVQIALIDARIKELNEHFKSHKKDFHSKTGLLRLVGKRKKLLDYLKRTELDRYKKLIETLGLRK</sequence>
<evidence type="ECO:0000255" key="1">
    <source>
        <dbReference type="HAMAP-Rule" id="MF_01343"/>
    </source>
</evidence>
<evidence type="ECO:0000305" key="2"/>
<reference key="1">
    <citation type="journal article" date="2006" name="Proc. Natl. Acad. Sci. U.S.A.">
        <title>Genome reduction in Leptospira borgpetersenii reflects limited transmission potential.</title>
        <authorList>
            <person name="Bulach D.M."/>
            <person name="Zuerner R.L."/>
            <person name="Wilson P."/>
            <person name="Seemann T."/>
            <person name="McGrath A."/>
            <person name="Cullen P.A."/>
            <person name="Davis J."/>
            <person name="Johnson M."/>
            <person name="Kuczek E."/>
            <person name="Alt D.P."/>
            <person name="Peterson-Burch B."/>
            <person name="Coppel R.L."/>
            <person name="Rood J.I."/>
            <person name="Davies J.K."/>
            <person name="Adler B."/>
        </authorList>
    </citation>
    <scope>NUCLEOTIDE SEQUENCE [LARGE SCALE GENOMIC DNA]</scope>
    <source>
        <strain>L550</strain>
    </source>
</reference>
<protein>
    <recommendedName>
        <fullName evidence="1">Small ribosomal subunit protein uS15</fullName>
    </recommendedName>
    <alternativeName>
        <fullName evidence="2">30S ribosomal protein S15</fullName>
    </alternativeName>
</protein>
<keyword id="KW-0687">Ribonucleoprotein</keyword>
<keyword id="KW-0689">Ribosomal protein</keyword>
<keyword id="KW-0694">RNA-binding</keyword>
<keyword id="KW-0699">rRNA-binding</keyword>
<dbReference type="EMBL" id="CP000348">
    <property type="protein sequence ID" value="ABJ79497.1"/>
    <property type="molecule type" value="Genomic_DNA"/>
</dbReference>
<dbReference type="RefSeq" id="WP_002632045.1">
    <property type="nucleotide sequence ID" value="NC_008508.1"/>
</dbReference>
<dbReference type="SMR" id="Q04ZJ8"/>
<dbReference type="GeneID" id="61174752"/>
<dbReference type="KEGG" id="lbl:LBL_2084"/>
<dbReference type="HOGENOM" id="CLU_148518_0_0_12"/>
<dbReference type="GO" id="GO:0022627">
    <property type="term" value="C:cytosolic small ribosomal subunit"/>
    <property type="evidence" value="ECO:0007669"/>
    <property type="project" value="TreeGrafter"/>
</dbReference>
<dbReference type="GO" id="GO:0019843">
    <property type="term" value="F:rRNA binding"/>
    <property type="evidence" value="ECO:0007669"/>
    <property type="project" value="UniProtKB-UniRule"/>
</dbReference>
<dbReference type="GO" id="GO:0003735">
    <property type="term" value="F:structural constituent of ribosome"/>
    <property type="evidence" value="ECO:0007669"/>
    <property type="project" value="InterPro"/>
</dbReference>
<dbReference type="GO" id="GO:0006412">
    <property type="term" value="P:translation"/>
    <property type="evidence" value="ECO:0007669"/>
    <property type="project" value="UniProtKB-UniRule"/>
</dbReference>
<dbReference type="CDD" id="cd00353">
    <property type="entry name" value="Ribosomal_S15p_S13e"/>
    <property type="match status" value="1"/>
</dbReference>
<dbReference type="FunFam" id="1.10.287.10:FF:000002">
    <property type="entry name" value="30S ribosomal protein S15"/>
    <property type="match status" value="1"/>
</dbReference>
<dbReference type="Gene3D" id="6.10.250.3130">
    <property type="match status" value="1"/>
</dbReference>
<dbReference type="Gene3D" id="1.10.287.10">
    <property type="entry name" value="S15/NS1, RNA-binding"/>
    <property type="match status" value="1"/>
</dbReference>
<dbReference type="HAMAP" id="MF_01343_B">
    <property type="entry name" value="Ribosomal_uS15_B"/>
    <property type="match status" value="1"/>
</dbReference>
<dbReference type="InterPro" id="IPR000589">
    <property type="entry name" value="Ribosomal_uS15"/>
</dbReference>
<dbReference type="InterPro" id="IPR005290">
    <property type="entry name" value="Ribosomal_uS15_bac-type"/>
</dbReference>
<dbReference type="InterPro" id="IPR009068">
    <property type="entry name" value="uS15_NS1_RNA-bd_sf"/>
</dbReference>
<dbReference type="NCBIfam" id="TIGR00952">
    <property type="entry name" value="S15_bact"/>
    <property type="match status" value="1"/>
</dbReference>
<dbReference type="PANTHER" id="PTHR23321">
    <property type="entry name" value="RIBOSOMAL PROTEIN S15, BACTERIAL AND ORGANELLAR"/>
    <property type="match status" value="1"/>
</dbReference>
<dbReference type="PANTHER" id="PTHR23321:SF26">
    <property type="entry name" value="SMALL RIBOSOMAL SUBUNIT PROTEIN US15M"/>
    <property type="match status" value="1"/>
</dbReference>
<dbReference type="Pfam" id="PF00312">
    <property type="entry name" value="Ribosomal_S15"/>
    <property type="match status" value="1"/>
</dbReference>
<dbReference type="SMART" id="SM01387">
    <property type="entry name" value="Ribosomal_S15"/>
    <property type="match status" value="1"/>
</dbReference>
<dbReference type="SUPFAM" id="SSF47060">
    <property type="entry name" value="S15/NS1 RNA-binding domain"/>
    <property type="match status" value="1"/>
</dbReference>
<dbReference type="PROSITE" id="PS00362">
    <property type="entry name" value="RIBOSOMAL_S15"/>
    <property type="match status" value="1"/>
</dbReference>